<protein>
    <recommendedName>
        <fullName>Diphthine methyltransferase</fullName>
        <ecNumber evidence="7">3.1.1.97</ecNumber>
    </recommendedName>
    <alternativeName>
        <fullName>Diphthamide biosynthesis protein 7</fullName>
    </alternativeName>
    <alternativeName>
        <fullName>Endosomal recycling protein 1</fullName>
    </alternativeName>
    <alternativeName>
        <fullName>Regulator of rDNA transcription protein 2</fullName>
    </alternativeName>
</protein>
<feature type="chain" id="PRO_0000202523" description="Diphthine methyltransferase">
    <location>
        <begin position="1"/>
        <end position="387"/>
    </location>
</feature>
<feature type="repeat" description="WD 1">
    <location>
        <begin position="62"/>
        <end position="102"/>
    </location>
</feature>
<feature type="repeat" description="WD 2">
    <location>
        <begin position="119"/>
        <end position="159"/>
    </location>
</feature>
<feature type="repeat" description="WD 3">
    <location>
        <begin position="195"/>
        <end position="237"/>
    </location>
</feature>
<feature type="repeat" description="WD 4">
    <location>
        <begin position="241"/>
        <end position="286"/>
    </location>
</feature>
<feature type="repeat" description="WD 5">
    <location>
        <begin position="357"/>
        <end position="387"/>
    </location>
</feature>
<accession>P38332</accession>
<accession>D6VQP2</accession>
<name>DPH7_YEAST</name>
<organism>
    <name type="scientific">Saccharomyces cerevisiae (strain ATCC 204508 / S288c)</name>
    <name type="common">Baker's yeast</name>
    <dbReference type="NCBI Taxonomy" id="559292"/>
    <lineage>
        <taxon>Eukaryota</taxon>
        <taxon>Fungi</taxon>
        <taxon>Dikarya</taxon>
        <taxon>Ascomycota</taxon>
        <taxon>Saccharomycotina</taxon>
        <taxon>Saccharomycetes</taxon>
        <taxon>Saccharomycetales</taxon>
        <taxon>Saccharomycetaceae</taxon>
        <taxon>Saccharomyces</taxon>
    </lineage>
</organism>
<keyword id="KW-0963">Cytoplasm</keyword>
<keyword id="KW-0967">Endosome</keyword>
<keyword id="KW-0378">Hydrolase</keyword>
<keyword id="KW-1185">Reference proteome</keyword>
<keyword id="KW-0677">Repeat</keyword>
<keyword id="KW-0853">WD repeat</keyword>
<proteinExistence type="evidence at protein level"/>
<gene>
    <name type="primary">RRT2</name>
    <name type="synonym">DPH7</name>
    <name type="synonym">ERE1</name>
    <name type="ordered locus">YBR246W</name>
    <name type="ORF">YBR1634</name>
</gene>
<evidence type="ECO:0000269" key="1">
    <source>
    </source>
</evidence>
<evidence type="ECO:0000269" key="2">
    <source>
    </source>
</evidence>
<evidence type="ECO:0000269" key="3">
    <source>
    </source>
</evidence>
<evidence type="ECO:0000269" key="4">
    <source>
    </source>
</evidence>
<evidence type="ECO:0000269" key="5">
    <source>
    </source>
</evidence>
<evidence type="ECO:0000269" key="6">
    <source>
    </source>
</evidence>
<evidence type="ECO:0000269" key="7">
    <source>
    </source>
</evidence>
<evidence type="ECO:0000305" key="8"/>
<evidence type="ECO:0000305" key="9">
    <source>
    </source>
</evidence>
<evidence type="ECO:0000305" key="10">
    <source>
    </source>
</evidence>
<evidence type="ECO:0000305" key="11">
    <source>
    </source>
</evidence>
<dbReference type="EC" id="3.1.1.97" evidence="7"/>
<dbReference type="EMBL" id="Z36115">
    <property type="protein sequence ID" value="CAA85209.1"/>
    <property type="molecule type" value="Genomic_DNA"/>
</dbReference>
<dbReference type="EMBL" id="AY692624">
    <property type="protein sequence ID" value="AAT92643.1"/>
    <property type="molecule type" value="Genomic_DNA"/>
</dbReference>
<dbReference type="EMBL" id="BK006936">
    <property type="protein sequence ID" value="DAA07362.1"/>
    <property type="molecule type" value="Genomic_DNA"/>
</dbReference>
<dbReference type="PIR" id="S46123">
    <property type="entry name" value="S46123"/>
</dbReference>
<dbReference type="RefSeq" id="NP_009805.1">
    <property type="nucleotide sequence ID" value="NM_001178594.1"/>
</dbReference>
<dbReference type="SMR" id="P38332"/>
<dbReference type="BioGRID" id="32941">
    <property type="interactions" value="119"/>
</dbReference>
<dbReference type="DIP" id="DIP-4948N"/>
<dbReference type="FunCoup" id="P38332">
    <property type="interactions" value="165"/>
</dbReference>
<dbReference type="IntAct" id="P38332">
    <property type="interactions" value="2"/>
</dbReference>
<dbReference type="STRING" id="4932.YBR246W"/>
<dbReference type="iPTMnet" id="P38332"/>
<dbReference type="PaxDb" id="4932-YBR246W"/>
<dbReference type="PeptideAtlas" id="P38332"/>
<dbReference type="EnsemblFungi" id="YBR246W_mRNA">
    <property type="protein sequence ID" value="YBR246W"/>
    <property type="gene ID" value="YBR246W"/>
</dbReference>
<dbReference type="GeneID" id="852548"/>
<dbReference type="KEGG" id="sce:YBR246W"/>
<dbReference type="AGR" id="SGD:S000000450"/>
<dbReference type="SGD" id="S000000450">
    <property type="gene designation" value="RRT2"/>
</dbReference>
<dbReference type="VEuPathDB" id="FungiDB:YBR246W"/>
<dbReference type="eggNOG" id="KOG0280">
    <property type="taxonomic scope" value="Eukaryota"/>
</dbReference>
<dbReference type="HOGENOM" id="CLU_036100_2_0_1"/>
<dbReference type="InParanoid" id="P38332"/>
<dbReference type="OMA" id="LVCCMYD"/>
<dbReference type="OrthoDB" id="1930760at2759"/>
<dbReference type="BioCyc" id="MetaCyc:MONOMER-18824"/>
<dbReference type="BioCyc" id="YEAST:MONOMER-18824"/>
<dbReference type="BRENDA" id="3.1.1.97">
    <property type="organism ID" value="984"/>
</dbReference>
<dbReference type="UniPathway" id="UPA00559"/>
<dbReference type="BioGRID-ORCS" id="852548">
    <property type="hits" value="0 hits in 10 CRISPR screens"/>
</dbReference>
<dbReference type="PRO" id="PR:P38332"/>
<dbReference type="Proteomes" id="UP000002311">
    <property type="component" value="Chromosome II"/>
</dbReference>
<dbReference type="RNAct" id="P38332">
    <property type="molecule type" value="protein"/>
</dbReference>
<dbReference type="GO" id="GO:0005737">
    <property type="term" value="C:cytoplasm"/>
    <property type="evidence" value="ECO:0000314"/>
    <property type="project" value="SGD"/>
</dbReference>
<dbReference type="GO" id="GO:0005829">
    <property type="term" value="C:cytosol"/>
    <property type="evidence" value="ECO:0000304"/>
    <property type="project" value="Reactome"/>
</dbReference>
<dbReference type="GO" id="GO:0005768">
    <property type="term" value="C:endosome"/>
    <property type="evidence" value="ECO:0000314"/>
    <property type="project" value="SGD"/>
</dbReference>
<dbReference type="GO" id="GO:0061685">
    <property type="term" value="F:diphthine methylesterase activity"/>
    <property type="evidence" value="ECO:0000314"/>
    <property type="project" value="SGD"/>
</dbReference>
<dbReference type="GO" id="GO:0051723">
    <property type="term" value="F:protein methylesterase activity"/>
    <property type="evidence" value="ECO:0000269"/>
    <property type="project" value="Reactome"/>
</dbReference>
<dbReference type="GO" id="GO:0032456">
    <property type="term" value="P:endocytic recycling"/>
    <property type="evidence" value="ECO:0000315"/>
    <property type="project" value="SGD"/>
</dbReference>
<dbReference type="GO" id="GO:0017183">
    <property type="term" value="P:protein histidyl modification to diphthamide"/>
    <property type="evidence" value="ECO:0000315"/>
    <property type="project" value="SGD"/>
</dbReference>
<dbReference type="FunFam" id="2.130.10.10:FF:001180">
    <property type="entry name" value="YBR246W-like protein"/>
    <property type="match status" value="1"/>
</dbReference>
<dbReference type="Gene3D" id="2.130.10.10">
    <property type="entry name" value="YVTN repeat-like/Quinoprotein amine dehydrogenase"/>
    <property type="match status" value="1"/>
</dbReference>
<dbReference type="InterPro" id="IPR052415">
    <property type="entry name" value="Diphthine_MTase"/>
</dbReference>
<dbReference type="InterPro" id="IPR015943">
    <property type="entry name" value="WD40/YVTN_repeat-like_dom_sf"/>
</dbReference>
<dbReference type="InterPro" id="IPR036322">
    <property type="entry name" value="WD40_repeat_dom_sf"/>
</dbReference>
<dbReference type="InterPro" id="IPR001680">
    <property type="entry name" value="WD40_rpt"/>
</dbReference>
<dbReference type="PANTHER" id="PTHR46042">
    <property type="entry name" value="DIPHTHINE METHYLTRANSFERASE"/>
    <property type="match status" value="1"/>
</dbReference>
<dbReference type="PANTHER" id="PTHR46042:SF1">
    <property type="entry name" value="DIPHTHINE METHYLTRANSFERASE"/>
    <property type="match status" value="1"/>
</dbReference>
<dbReference type="SMART" id="SM00320">
    <property type="entry name" value="WD40"/>
    <property type="match status" value="4"/>
</dbReference>
<dbReference type="SUPFAM" id="SSF50978">
    <property type="entry name" value="WD40 repeat-like"/>
    <property type="match status" value="1"/>
</dbReference>
<reference key="1">
    <citation type="journal article" date="1994" name="EMBO J.">
        <title>Complete DNA sequence of yeast chromosome II.</title>
        <authorList>
            <person name="Feldmann H."/>
            <person name="Aigle M."/>
            <person name="Aljinovic G."/>
            <person name="Andre B."/>
            <person name="Baclet M.C."/>
            <person name="Barthe C."/>
            <person name="Baur A."/>
            <person name="Becam A.-M."/>
            <person name="Biteau N."/>
            <person name="Boles E."/>
            <person name="Brandt T."/>
            <person name="Brendel M."/>
            <person name="Brueckner M."/>
            <person name="Bussereau F."/>
            <person name="Christiansen C."/>
            <person name="Contreras R."/>
            <person name="Crouzet M."/>
            <person name="Cziepluch C."/>
            <person name="Demolis N."/>
            <person name="Delaveau T."/>
            <person name="Doignon F."/>
            <person name="Domdey H."/>
            <person name="Duesterhus S."/>
            <person name="Dubois E."/>
            <person name="Dujon B."/>
            <person name="El Bakkoury M."/>
            <person name="Entian K.-D."/>
            <person name="Feuermann M."/>
            <person name="Fiers W."/>
            <person name="Fobo G.M."/>
            <person name="Fritz C."/>
            <person name="Gassenhuber J."/>
            <person name="Glansdorff N."/>
            <person name="Goffeau A."/>
            <person name="Grivell L.A."/>
            <person name="de Haan M."/>
            <person name="Hein C."/>
            <person name="Herbert C.J."/>
            <person name="Hollenberg C.P."/>
            <person name="Holmstroem K."/>
            <person name="Jacq C."/>
            <person name="Jacquet M."/>
            <person name="Jauniaux J.-C."/>
            <person name="Jonniaux J.-L."/>
            <person name="Kallesoee T."/>
            <person name="Kiesau P."/>
            <person name="Kirchrath L."/>
            <person name="Koetter P."/>
            <person name="Korol S."/>
            <person name="Liebl S."/>
            <person name="Logghe M."/>
            <person name="Lohan A.J.E."/>
            <person name="Louis E.J."/>
            <person name="Li Z.Y."/>
            <person name="Maat M.J."/>
            <person name="Mallet L."/>
            <person name="Mannhaupt G."/>
            <person name="Messenguy F."/>
            <person name="Miosga T."/>
            <person name="Molemans F."/>
            <person name="Mueller S."/>
            <person name="Nasr F."/>
            <person name="Obermaier B."/>
            <person name="Perea J."/>
            <person name="Pierard A."/>
            <person name="Piravandi E."/>
            <person name="Pohl F.M."/>
            <person name="Pohl T.M."/>
            <person name="Potier S."/>
            <person name="Proft M."/>
            <person name="Purnelle B."/>
            <person name="Ramezani Rad M."/>
            <person name="Rieger M."/>
            <person name="Rose M."/>
            <person name="Schaaff-Gerstenschlaeger I."/>
            <person name="Scherens B."/>
            <person name="Schwarzlose C."/>
            <person name="Skala J."/>
            <person name="Slonimski P.P."/>
            <person name="Smits P.H.M."/>
            <person name="Souciet J.-L."/>
            <person name="Steensma H.Y."/>
            <person name="Stucka R."/>
            <person name="Urrestarazu L.A."/>
            <person name="van der Aart Q.J.M."/>
            <person name="Van Dyck L."/>
            <person name="Vassarotti A."/>
            <person name="Vetter I."/>
            <person name="Vierendeels F."/>
            <person name="Vissers S."/>
            <person name="Wagner G."/>
            <person name="de Wergifosse P."/>
            <person name="Wolfe K.H."/>
            <person name="Zagulski M."/>
            <person name="Zimmermann F.K."/>
            <person name="Mewes H.-W."/>
            <person name="Kleine K."/>
        </authorList>
    </citation>
    <scope>NUCLEOTIDE SEQUENCE [LARGE SCALE GENOMIC DNA]</scope>
    <source>
        <strain>ATCC 204508 / S288c</strain>
    </source>
</reference>
<reference key="2">
    <citation type="journal article" date="2014" name="G3 (Bethesda)">
        <title>The reference genome sequence of Saccharomyces cerevisiae: Then and now.</title>
        <authorList>
            <person name="Engel S.R."/>
            <person name="Dietrich F.S."/>
            <person name="Fisk D.G."/>
            <person name="Binkley G."/>
            <person name="Balakrishnan R."/>
            <person name="Costanzo M.C."/>
            <person name="Dwight S.S."/>
            <person name="Hitz B.C."/>
            <person name="Karra K."/>
            <person name="Nash R.S."/>
            <person name="Weng S."/>
            <person name="Wong E.D."/>
            <person name="Lloyd P."/>
            <person name="Skrzypek M.S."/>
            <person name="Miyasato S.R."/>
            <person name="Simison M."/>
            <person name="Cherry J.M."/>
        </authorList>
    </citation>
    <scope>GENOME REANNOTATION</scope>
    <source>
        <strain>ATCC 204508 / S288c</strain>
    </source>
</reference>
<reference key="3">
    <citation type="journal article" date="2007" name="Genome Res.">
        <title>Approaching a complete repository of sequence-verified protein-encoding clones for Saccharomyces cerevisiae.</title>
        <authorList>
            <person name="Hu Y."/>
            <person name="Rolfs A."/>
            <person name="Bhullar B."/>
            <person name="Murthy T.V.S."/>
            <person name="Zhu C."/>
            <person name="Berger M.F."/>
            <person name="Camargo A.A."/>
            <person name="Kelley F."/>
            <person name="McCarron S."/>
            <person name="Jepson D."/>
            <person name="Richardson A."/>
            <person name="Raphael J."/>
            <person name="Moreira D."/>
            <person name="Taycher E."/>
            <person name="Zuo D."/>
            <person name="Mohr S."/>
            <person name="Kane M.F."/>
            <person name="Williamson J."/>
            <person name="Simpson A.J.G."/>
            <person name="Bulyk M.L."/>
            <person name="Harlow E."/>
            <person name="Marsischky G."/>
            <person name="Kolodner R.D."/>
            <person name="LaBaer J."/>
        </authorList>
    </citation>
    <scope>NUCLEOTIDE SEQUENCE [GENOMIC DNA]</scope>
    <source>
        <strain>ATCC 204508 / S288c</strain>
    </source>
</reference>
<reference key="4">
    <citation type="journal article" date="2003" name="Nature">
        <title>Global analysis of protein expression in yeast.</title>
        <authorList>
            <person name="Ghaemmaghami S."/>
            <person name="Huh W.-K."/>
            <person name="Bower K."/>
            <person name="Howson R.W."/>
            <person name="Belle A."/>
            <person name="Dephoure N."/>
            <person name="O'Shea E.K."/>
            <person name="Weissman J.S."/>
        </authorList>
    </citation>
    <scope>LEVEL OF PROTEIN EXPRESSION [LARGE SCALE ANALYSIS]</scope>
</reference>
<reference key="5">
    <citation type="journal article" date="2009" name="Genetics">
        <title>Genetic identification of factors that modulate ribosomal DNA transcription in Saccharomyces cerevisiae.</title>
        <authorList>
            <person name="Hontz R.D."/>
            <person name="Niederer R.O."/>
            <person name="Johnson J.M."/>
            <person name="Smith J.S."/>
        </authorList>
    </citation>
    <scope>GENE NAME</scope>
    <scope>FUNCTION</scope>
</reference>
<reference key="6">
    <citation type="journal article" date="2009" name="Science">
        <title>Haploid genetic screens in human cells identify host factors used by pathogens.</title>
        <authorList>
            <person name="Carette J.E."/>
            <person name="Guimaraes C.P."/>
            <person name="Varadarajan M."/>
            <person name="Park A.S."/>
            <person name="Wuethrich I."/>
            <person name="Godarova A."/>
            <person name="Kotecki M."/>
            <person name="Cochran B.H."/>
            <person name="Spooner E."/>
            <person name="Ploegh H.L."/>
            <person name="Brummelkamp T.R."/>
        </authorList>
    </citation>
    <scope>FUNCTION</scope>
</reference>
<reference key="7">
    <citation type="journal article" date="2011" name="Mol. Biol. Cell">
        <title>Two novel WD40 domain-containing proteins, Ere1 and Ere2, function in the retromer-mediated endosomal recycling pathway.</title>
        <authorList>
            <person name="Shi Y."/>
            <person name="Stefan C.J."/>
            <person name="Rue S.M."/>
            <person name="Teis D."/>
            <person name="Emr S.D."/>
        </authorList>
    </citation>
    <scope>FUNCTION</scope>
    <scope>SUBCELLULAR LOCATION</scope>
    <scope>INTERACTION WITH CAN1 AND RRT10</scope>
</reference>
<reference key="8">
    <citation type="journal article" date="2012" name="J. Am. Chem. Soc.">
        <title>YBR246W is required for the third step of diphthamide biosynthesis.</title>
        <authorList>
            <person name="Su X."/>
            <person name="Chen W."/>
            <person name="Lee W."/>
            <person name="Jiang H."/>
            <person name="Zhang S."/>
            <person name="Lin H."/>
        </authorList>
    </citation>
    <scope>FUNCTION</scope>
</reference>
<reference key="9">
    <citation type="journal article" date="2013" name="PLoS Genet.">
        <title>The amidation step of diphthamide biosynthesis in yeast requires DPH6, a gene identified through mining the DPH1-DPH5 interaction network.</title>
        <authorList>
            <person name="Uthman S."/>
            <person name="Bar C."/>
            <person name="Scheidt V."/>
            <person name="Liu S."/>
            <person name="ten Have S."/>
            <person name="Giorgini F."/>
            <person name="Stark M.J."/>
            <person name="Schaffrath R."/>
        </authorList>
    </citation>
    <scope>FUNCTION</scope>
    <scope>DISRUPTION PHENOTYPE</scope>
</reference>
<reference key="10">
    <citation type="journal article" date="2014" name="J. Am. Chem. Soc.">
        <title>Dph7 catalyzes a previously unknown demethylation step in diphthamide biosynthesis.</title>
        <authorList>
            <person name="Lin Z."/>
            <person name="Su X."/>
            <person name="Chen W."/>
            <person name="Ci B."/>
            <person name="Zhang S."/>
            <person name="Lin H."/>
        </authorList>
    </citation>
    <scope>FUNCTION</scope>
    <scope>CATALYTIC ACTIVITY</scope>
</reference>
<comment type="function">
    <text evidence="2 3 4 5 6 7">Catalyzes the demethylation of diphthine methyl ester to form diphthine, an intermediate in diphthamide biosynthesis, a post-translational modification of histidine which occurs in translation elongation factor 2 (EFT1 and EFT2). Also plays a role in the regulation of the retromer complex and is required for the recycling from endosomes of plasma membrane proteins like CAN1 and MUP1. Identified in a screen for mutants with decreased levels of rDNA transcription.</text>
</comment>
<comment type="catalytic activity">
    <reaction evidence="7">
        <text>diphthine methyl ester-[translation elongation factor 2] + H2O = diphthine-[translation elongation factor 2] + methanol + H(+)</text>
        <dbReference type="Rhea" id="RHEA:42656"/>
        <dbReference type="Rhea" id="RHEA-COMP:10172"/>
        <dbReference type="Rhea" id="RHEA-COMP:10173"/>
        <dbReference type="ChEBI" id="CHEBI:15377"/>
        <dbReference type="ChEBI" id="CHEBI:15378"/>
        <dbReference type="ChEBI" id="CHEBI:17790"/>
        <dbReference type="ChEBI" id="CHEBI:79005"/>
        <dbReference type="ChEBI" id="CHEBI:82696"/>
        <dbReference type="EC" id="3.1.1.97"/>
    </reaction>
</comment>
<comment type="pathway">
    <text>Protein modification; peptidyl-diphthamide biosynthesis.</text>
</comment>
<comment type="subunit">
    <text evidence="4">Interacts with CAN1 and RTT10.</text>
</comment>
<comment type="subcellular location">
    <subcellularLocation>
        <location evidence="4">Cytoplasm</location>
    </subcellularLocation>
    <subcellularLocation>
        <location evidence="4">Endosome</location>
    </subcellularLocation>
    <text>Recruited to endosomes in cells in which increased recycling of internalized plasma membrane proteins occurs.</text>
</comment>
<comment type="disruption phenotype">
    <text evidence="6">Accumulates diphthine, the last intermediate in the diphthamide biosynthesis pathway. Increases the interaction of DPH5 with elongation factor 2.</text>
</comment>
<comment type="miscellaneous">
    <text evidence="1">Present with 2640 molecules/cell in log phase SD medium.</text>
</comment>
<comment type="similarity">
    <text evidence="8">Belongs to the DPH7 family.</text>
</comment>
<comment type="caution">
    <text evidence="9 10 11">Was originally (PubMed:19965467) thought to be required for the first step of diphthamide biosynthesis but further studies (PubMed:22188241, PubMed:23468660) clearly suggest that it is involved in the third step of diphthamide biosynthesis.</text>
</comment>
<sequence length="387" mass="43308">MDSIQESDVLNAVKTKLPPCCLRIFRNKIILVGTYDLDKSTGYRSGSLDVFTMDLKLLCSNNTYGAILDLKLSPFDDTLICTAHSTGNIMLWRIRCTDKDDFQSNELDIHAIANLQLFEKDVLIASCHFSPLDCKKLLVTNTAGEAATIDIRTLSVQFTASAIAQAYSKLDKIDYEVQGATEKVIHVESGQFLKPHELECWTAEFGSLQPFQDVVFTGGDDSRIMAHDLRSKEFIWSNNRIHDAGVVSIKCSQPNFRNNKPTSIITGSYDDNIRSLDLRMMGESIFPGANVPTVNKLACDLGGGVWRFVESPIDQEQSHHNGSDRLLVCCMYNGAKVVTMNDNSDEYFQIQHYLKKGHDSMCYGGDWSNSLIATCSFYDNSLQTWIV</sequence>